<feature type="chain" id="PRO_0000100560" description="Phosphoribosylformylglycinamidine synthase subunit PurQ">
    <location>
        <begin position="1"/>
        <end position="223"/>
    </location>
</feature>
<feature type="domain" description="Glutamine amidotransferase type-1" evidence="1">
    <location>
        <begin position="2"/>
        <end position="223"/>
    </location>
</feature>
<feature type="active site" description="Nucleophile" evidence="1">
    <location>
        <position position="86"/>
    </location>
</feature>
<feature type="active site" evidence="1">
    <location>
        <position position="195"/>
    </location>
</feature>
<feature type="active site" evidence="1">
    <location>
        <position position="197"/>
    </location>
</feature>
<evidence type="ECO:0000255" key="1">
    <source>
        <dbReference type="HAMAP-Rule" id="MF_00421"/>
    </source>
</evidence>
<comment type="function">
    <text evidence="1">Part of the phosphoribosylformylglycinamidine synthase complex involved in the purines biosynthetic pathway. Catalyzes the ATP-dependent conversion of formylglycinamide ribonucleotide (FGAR) and glutamine to yield formylglycinamidine ribonucleotide (FGAM) and glutamate. The FGAM synthase complex is composed of three subunits. PurQ produces an ammonia molecule by converting glutamine to glutamate. PurL transfers the ammonia molecule to FGAR to form FGAM in an ATP-dependent manner. PurS interacts with PurQ and PurL and is thought to assist in the transfer of the ammonia molecule from PurQ to PurL.</text>
</comment>
<comment type="catalytic activity">
    <reaction evidence="1">
        <text>N(2)-formyl-N(1)-(5-phospho-beta-D-ribosyl)glycinamide + L-glutamine + ATP + H2O = 2-formamido-N(1)-(5-O-phospho-beta-D-ribosyl)acetamidine + L-glutamate + ADP + phosphate + H(+)</text>
        <dbReference type="Rhea" id="RHEA:17129"/>
        <dbReference type="ChEBI" id="CHEBI:15377"/>
        <dbReference type="ChEBI" id="CHEBI:15378"/>
        <dbReference type="ChEBI" id="CHEBI:29985"/>
        <dbReference type="ChEBI" id="CHEBI:30616"/>
        <dbReference type="ChEBI" id="CHEBI:43474"/>
        <dbReference type="ChEBI" id="CHEBI:58359"/>
        <dbReference type="ChEBI" id="CHEBI:147286"/>
        <dbReference type="ChEBI" id="CHEBI:147287"/>
        <dbReference type="ChEBI" id="CHEBI:456216"/>
        <dbReference type="EC" id="6.3.5.3"/>
    </reaction>
</comment>
<comment type="catalytic activity">
    <reaction evidence="1">
        <text>L-glutamine + H2O = L-glutamate + NH4(+)</text>
        <dbReference type="Rhea" id="RHEA:15889"/>
        <dbReference type="ChEBI" id="CHEBI:15377"/>
        <dbReference type="ChEBI" id="CHEBI:28938"/>
        <dbReference type="ChEBI" id="CHEBI:29985"/>
        <dbReference type="ChEBI" id="CHEBI:58359"/>
        <dbReference type="EC" id="3.5.1.2"/>
    </reaction>
</comment>
<comment type="pathway">
    <text evidence="1">Purine metabolism; IMP biosynthesis via de novo pathway; 5-amino-1-(5-phospho-D-ribosyl)imidazole from N(2)-formyl-N(1)-(5-phospho-D-ribosyl)glycinamide: step 1/2.</text>
</comment>
<comment type="subunit">
    <text evidence="1">Part of the FGAM synthase complex composed of 1 PurL, 1 PurQ and 2 PurS subunits.</text>
</comment>
<comment type="subcellular location">
    <subcellularLocation>
        <location evidence="1">Cytoplasm</location>
    </subcellularLocation>
</comment>
<proteinExistence type="inferred from homology"/>
<gene>
    <name evidence="1" type="primary">purQ</name>
    <name type="ordered locus">LL1531</name>
    <name type="ORF">L176360</name>
</gene>
<dbReference type="EC" id="6.3.5.3" evidence="1"/>
<dbReference type="EC" id="3.5.1.2" evidence="1"/>
<dbReference type="EMBL" id="AE005176">
    <property type="protein sequence ID" value="AAK05629.1"/>
    <property type="molecule type" value="Genomic_DNA"/>
</dbReference>
<dbReference type="PIR" id="C86816">
    <property type="entry name" value="C86816"/>
</dbReference>
<dbReference type="RefSeq" id="NP_267687.1">
    <property type="nucleotide sequence ID" value="NC_002662.1"/>
</dbReference>
<dbReference type="RefSeq" id="WP_003130032.1">
    <property type="nucleotide sequence ID" value="NC_002662.1"/>
</dbReference>
<dbReference type="SMR" id="Q9CFE7"/>
<dbReference type="PaxDb" id="272623-L176360"/>
<dbReference type="EnsemblBacteria" id="AAK05629">
    <property type="protein sequence ID" value="AAK05629"/>
    <property type="gene ID" value="L176360"/>
</dbReference>
<dbReference type="KEGG" id="lla:L176360"/>
<dbReference type="PATRIC" id="fig|272623.7.peg.1642"/>
<dbReference type="eggNOG" id="COG0047">
    <property type="taxonomic scope" value="Bacteria"/>
</dbReference>
<dbReference type="HOGENOM" id="CLU_001031_3_1_9"/>
<dbReference type="OrthoDB" id="9804441at2"/>
<dbReference type="UniPathway" id="UPA00074">
    <property type="reaction ID" value="UER00128"/>
</dbReference>
<dbReference type="Proteomes" id="UP000002196">
    <property type="component" value="Chromosome"/>
</dbReference>
<dbReference type="GO" id="GO:0005737">
    <property type="term" value="C:cytoplasm"/>
    <property type="evidence" value="ECO:0007669"/>
    <property type="project" value="UniProtKB-SubCell"/>
</dbReference>
<dbReference type="GO" id="GO:0005524">
    <property type="term" value="F:ATP binding"/>
    <property type="evidence" value="ECO:0007669"/>
    <property type="project" value="UniProtKB-KW"/>
</dbReference>
<dbReference type="GO" id="GO:0004359">
    <property type="term" value="F:glutaminase activity"/>
    <property type="evidence" value="ECO:0007669"/>
    <property type="project" value="UniProtKB-EC"/>
</dbReference>
<dbReference type="GO" id="GO:0004642">
    <property type="term" value="F:phosphoribosylformylglycinamidine synthase activity"/>
    <property type="evidence" value="ECO:0007669"/>
    <property type="project" value="UniProtKB-UniRule"/>
</dbReference>
<dbReference type="GO" id="GO:0006189">
    <property type="term" value="P:'de novo' IMP biosynthetic process"/>
    <property type="evidence" value="ECO:0007669"/>
    <property type="project" value="UniProtKB-UniRule"/>
</dbReference>
<dbReference type="CDD" id="cd01740">
    <property type="entry name" value="GATase1_FGAR_AT"/>
    <property type="match status" value="1"/>
</dbReference>
<dbReference type="FunFam" id="3.40.50.880:FF:000019">
    <property type="entry name" value="Phosphoribosylformylglycinamidine synthase subunit PurQ"/>
    <property type="match status" value="1"/>
</dbReference>
<dbReference type="Gene3D" id="3.40.50.880">
    <property type="match status" value="1"/>
</dbReference>
<dbReference type="HAMAP" id="MF_00421">
    <property type="entry name" value="PurQ"/>
    <property type="match status" value="1"/>
</dbReference>
<dbReference type="InterPro" id="IPR029062">
    <property type="entry name" value="Class_I_gatase-like"/>
</dbReference>
<dbReference type="InterPro" id="IPR010075">
    <property type="entry name" value="PRibForGlyAmidine_synth_PurQ"/>
</dbReference>
<dbReference type="NCBIfam" id="TIGR01737">
    <property type="entry name" value="FGAM_synth_I"/>
    <property type="match status" value="1"/>
</dbReference>
<dbReference type="NCBIfam" id="NF002957">
    <property type="entry name" value="PRK03619.1"/>
    <property type="match status" value="1"/>
</dbReference>
<dbReference type="PANTHER" id="PTHR47552">
    <property type="entry name" value="PHOSPHORIBOSYLFORMYLGLYCINAMIDINE SYNTHASE SUBUNIT PURQ"/>
    <property type="match status" value="1"/>
</dbReference>
<dbReference type="PANTHER" id="PTHR47552:SF1">
    <property type="entry name" value="PHOSPHORIBOSYLFORMYLGLYCINAMIDINE SYNTHASE SUBUNIT PURQ"/>
    <property type="match status" value="1"/>
</dbReference>
<dbReference type="Pfam" id="PF13507">
    <property type="entry name" value="GATase_5"/>
    <property type="match status" value="1"/>
</dbReference>
<dbReference type="PIRSF" id="PIRSF001586">
    <property type="entry name" value="FGAM_synth_I"/>
    <property type="match status" value="1"/>
</dbReference>
<dbReference type="SMART" id="SM01211">
    <property type="entry name" value="GATase_5"/>
    <property type="match status" value="1"/>
</dbReference>
<dbReference type="SUPFAM" id="SSF52317">
    <property type="entry name" value="Class I glutamine amidotransferase-like"/>
    <property type="match status" value="1"/>
</dbReference>
<dbReference type="PROSITE" id="PS51273">
    <property type="entry name" value="GATASE_TYPE_1"/>
    <property type="match status" value="1"/>
</dbReference>
<keyword id="KW-0067">ATP-binding</keyword>
<keyword id="KW-0963">Cytoplasm</keyword>
<keyword id="KW-0315">Glutamine amidotransferase</keyword>
<keyword id="KW-0378">Hydrolase</keyword>
<keyword id="KW-0436">Ligase</keyword>
<keyword id="KW-0547">Nucleotide-binding</keyword>
<keyword id="KW-0658">Purine biosynthesis</keyword>
<keyword id="KW-1185">Reference proteome</keyword>
<reference key="1">
    <citation type="journal article" date="2001" name="Genome Res.">
        <title>The complete genome sequence of the lactic acid bacterium Lactococcus lactis ssp. lactis IL1403.</title>
        <authorList>
            <person name="Bolotin A."/>
            <person name="Wincker P."/>
            <person name="Mauger S."/>
            <person name="Jaillon O."/>
            <person name="Malarme K."/>
            <person name="Weissenbach J."/>
            <person name="Ehrlich S.D."/>
            <person name="Sorokin A."/>
        </authorList>
    </citation>
    <scope>NUCLEOTIDE SEQUENCE [LARGE SCALE GENOMIC DNA]</scope>
    <source>
        <strain>IL1403</strain>
    </source>
</reference>
<protein>
    <recommendedName>
        <fullName evidence="1">Phosphoribosylformylglycinamidine synthase subunit PurQ</fullName>
        <shortName evidence="1">FGAM synthase</shortName>
        <ecNumber evidence="1">6.3.5.3</ecNumber>
    </recommendedName>
    <alternativeName>
        <fullName evidence="1">Formylglycinamide ribonucleotide amidotransferase subunit I</fullName>
        <shortName evidence="1">FGAR amidotransferase I</shortName>
        <shortName evidence="1">FGAR-AT I</shortName>
    </alternativeName>
    <alternativeName>
        <fullName evidence="1">Glutaminase PurQ</fullName>
        <ecNumber evidence="1">3.5.1.2</ecNumber>
    </alternativeName>
    <alternativeName>
        <fullName evidence="1">Phosphoribosylformylglycinamidine synthase subunit I</fullName>
    </alternativeName>
</protein>
<organism>
    <name type="scientific">Lactococcus lactis subsp. lactis (strain IL1403)</name>
    <name type="common">Streptococcus lactis</name>
    <dbReference type="NCBI Taxonomy" id="272623"/>
    <lineage>
        <taxon>Bacteria</taxon>
        <taxon>Bacillati</taxon>
        <taxon>Bacillota</taxon>
        <taxon>Bacilli</taxon>
        <taxon>Lactobacillales</taxon>
        <taxon>Streptococcaceae</taxon>
        <taxon>Lactococcus</taxon>
    </lineage>
</organism>
<name>PURQ_LACLA</name>
<sequence>MKFAVIQFPGSNCDFDLLWAIRDVMGAEAEFVWHDEKSLAGFDGVLIPGGFSYGDYLRCGAIASFANIMPEIKRLAKEGKPVFGTCNGFQILVESGLLPGVLIRNEGLKFVSKWQALKVENNQSNFTTEYAKDALINLPIAHGEGQYVADEAQLAELKANGQIIFTYADENPNGSVENIAGIVNKEGNVLGMMPHPERAMEELLGGADGVDLFASVLKNFVGK</sequence>
<accession>Q9CFE7</accession>